<reference key="1">
    <citation type="journal article" date="2004" name="PLoS Biol.">
        <title>Genomic insights into methanotrophy: the complete genome sequence of Methylococcus capsulatus (Bath).</title>
        <authorList>
            <person name="Ward N.L."/>
            <person name="Larsen O."/>
            <person name="Sakwa J."/>
            <person name="Bruseth L."/>
            <person name="Khouri H.M."/>
            <person name="Durkin A.S."/>
            <person name="Dimitrov G."/>
            <person name="Jiang L."/>
            <person name="Scanlan D."/>
            <person name="Kang K.H."/>
            <person name="Lewis M.R."/>
            <person name="Nelson K.E."/>
            <person name="Methe B.A."/>
            <person name="Wu M."/>
            <person name="Heidelberg J.F."/>
            <person name="Paulsen I.T."/>
            <person name="Fouts D.E."/>
            <person name="Ravel J."/>
            <person name="Tettelin H."/>
            <person name="Ren Q."/>
            <person name="Read T.D."/>
            <person name="DeBoy R.T."/>
            <person name="Seshadri R."/>
            <person name="Salzberg S.L."/>
            <person name="Jensen H.B."/>
            <person name="Birkeland N.K."/>
            <person name="Nelson W.C."/>
            <person name="Dodson R.J."/>
            <person name="Grindhaug S.H."/>
            <person name="Holt I.E."/>
            <person name="Eidhammer I."/>
            <person name="Jonasen I."/>
            <person name="Vanaken S."/>
            <person name="Utterback T.R."/>
            <person name="Feldblyum T.V."/>
            <person name="Fraser C.M."/>
            <person name="Lillehaug J.R."/>
            <person name="Eisen J.A."/>
        </authorList>
    </citation>
    <scope>NUCLEOTIDE SEQUENCE [LARGE SCALE GENOMIC DNA]</scope>
    <source>
        <strain>ATCC 33009 / NCIMB 11132 / Bath</strain>
    </source>
</reference>
<accession>Q60C59</accession>
<evidence type="ECO:0000255" key="1">
    <source>
        <dbReference type="HAMAP-Rule" id="MF_00679"/>
    </source>
</evidence>
<comment type="function">
    <text evidence="1">Chaperone involved in the maturation of iron-sulfur cluster-containing proteins. Has a low intrinsic ATPase activity which is markedly stimulated by HscB.</text>
</comment>
<comment type="similarity">
    <text evidence="1">Belongs to the heat shock protein 70 family.</text>
</comment>
<protein>
    <recommendedName>
        <fullName evidence="1">Chaperone protein HscA homolog</fullName>
    </recommendedName>
</protein>
<sequence>MLLQISEPGAGVKPQRRLAVGIDLGTTHSLVATVRDEQTVVLGDAQGRVLLPSVVRYLGAGAIEVGYEAKARQAEDPENTFVSVKRYMGRGLGDLASHHGAPYRFVEGEGMVQFDTRAGRISPVQVSAEILKVLRDRAVAELGGELAGAVITVPAYFDEAQRQATKDAAKLAGLEVFRLLNEPTAAAVAYGLDNAAEGVYAVYDLGGGTFDISVLKLTRGVFEVLATNGDPALGGDDFDRAVYDWLLAQSGLNGLSSSDASLLLTASRAAKERLSEQTEATVDTMLSDGSRIVATLSRDTFAELTAGLVKKTLTPVRKALRDAGLAIDDIKGVVLVGGATRMPCIREAVAEFFQQTPLTDLDPDKVVALGAAMQANLLAGNRAGGDWLLLDVIPLSLGIETLGGLCEKIVPRNTTIPVARAQEFTTWKDGQTAMSIHVVQGERELVSECRSLARFELRGIPPMAAGAARIRVTYQVDADGLLNVTAAEQTSGVEARIEVKPSYGLSDAEVARMIEDSYLHARDDLEARRLQEQKVEAARLIEATESALTEDGGLLTEQELEVLVKGLQVLKGAMEGSDWQAIKNAADALNEASTEFAGRRMDHSIKAALTGQKLESLGV</sequence>
<gene>
    <name evidence="1" type="primary">hscA</name>
    <name type="ordered locus">MCA0252</name>
</gene>
<keyword id="KW-0067">ATP-binding</keyword>
<keyword id="KW-0143">Chaperone</keyword>
<keyword id="KW-0547">Nucleotide-binding</keyword>
<keyword id="KW-1185">Reference proteome</keyword>
<name>HSCA_METCA</name>
<feature type="chain" id="PRO_0000078632" description="Chaperone protein HscA homolog">
    <location>
        <begin position="1"/>
        <end position="619"/>
    </location>
</feature>
<dbReference type="EMBL" id="AE017282">
    <property type="protein sequence ID" value="AAU90590.1"/>
    <property type="molecule type" value="Genomic_DNA"/>
</dbReference>
<dbReference type="RefSeq" id="WP_010959616.1">
    <property type="nucleotide sequence ID" value="NC_002977.6"/>
</dbReference>
<dbReference type="SMR" id="Q60C59"/>
<dbReference type="STRING" id="243233.MCA0252"/>
<dbReference type="GeneID" id="88222596"/>
<dbReference type="KEGG" id="mca:MCA0252"/>
<dbReference type="eggNOG" id="COG0443">
    <property type="taxonomic scope" value="Bacteria"/>
</dbReference>
<dbReference type="HOGENOM" id="CLU_005965_2_4_6"/>
<dbReference type="Proteomes" id="UP000006821">
    <property type="component" value="Chromosome"/>
</dbReference>
<dbReference type="GO" id="GO:0005524">
    <property type="term" value="F:ATP binding"/>
    <property type="evidence" value="ECO:0007669"/>
    <property type="project" value="UniProtKB-KW"/>
</dbReference>
<dbReference type="GO" id="GO:0016887">
    <property type="term" value="F:ATP hydrolysis activity"/>
    <property type="evidence" value="ECO:0007669"/>
    <property type="project" value="UniProtKB-UniRule"/>
</dbReference>
<dbReference type="GO" id="GO:0140662">
    <property type="term" value="F:ATP-dependent protein folding chaperone"/>
    <property type="evidence" value="ECO:0007669"/>
    <property type="project" value="InterPro"/>
</dbReference>
<dbReference type="GO" id="GO:0051082">
    <property type="term" value="F:unfolded protein binding"/>
    <property type="evidence" value="ECO:0007669"/>
    <property type="project" value="InterPro"/>
</dbReference>
<dbReference type="GO" id="GO:0016226">
    <property type="term" value="P:iron-sulfur cluster assembly"/>
    <property type="evidence" value="ECO:0007669"/>
    <property type="project" value="InterPro"/>
</dbReference>
<dbReference type="FunFam" id="3.30.420.40:FF:000046">
    <property type="entry name" value="Chaperone protein HscA"/>
    <property type="match status" value="1"/>
</dbReference>
<dbReference type="FunFam" id="2.60.34.10:FF:000005">
    <property type="entry name" value="Chaperone protein HscA homolog"/>
    <property type="match status" value="1"/>
</dbReference>
<dbReference type="Gene3D" id="1.20.1270.10">
    <property type="match status" value="1"/>
</dbReference>
<dbReference type="Gene3D" id="3.30.420.40">
    <property type="match status" value="2"/>
</dbReference>
<dbReference type="Gene3D" id="3.90.640.10">
    <property type="entry name" value="Actin, Chain A, domain 4"/>
    <property type="match status" value="1"/>
</dbReference>
<dbReference type="Gene3D" id="2.60.34.10">
    <property type="entry name" value="Substrate Binding Domain Of DNAk, Chain A, domain 1"/>
    <property type="match status" value="1"/>
</dbReference>
<dbReference type="HAMAP" id="MF_00679">
    <property type="entry name" value="HscA"/>
    <property type="match status" value="1"/>
</dbReference>
<dbReference type="InterPro" id="IPR043129">
    <property type="entry name" value="ATPase_NBD"/>
</dbReference>
<dbReference type="InterPro" id="IPR018181">
    <property type="entry name" value="Heat_shock_70_CS"/>
</dbReference>
<dbReference type="InterPro" id="IPR029048">
    <property type="entry name" value="HSP70_C_sf"/>
</dbReference>
<dbReference type="InterPro" id="IPR029047">
    <property type="entry name" value="HSP70_peptide-bd_sf"/>
</dbReference>
<dbReference type="InterPro" id="IPR013126">
    <property type="entry name" value="Hsp_70_fam"/>
</dbReference>
<dbReference type="InterPro" id="IPR010236">
    <property type="entry name" value="ISC_FeS_clus_asmbl_HscA"/>
</dbReference>
<dbReference type="NCBIfam" id="TIGR01991">
    <property type="entry name" value="HscA"/>
    <property type="match status" value="1"/>
</dbReference>
<dbReference type="NCBIfam" id="NF003520">
    <property type="entry name" value="PRK05183.1"/>
    <property type="match status" value="1"/>
</dbReference>
<dbReference type="PANTHER" id="PTHR19375">
    <property type="entry name" value="HEAT SHOCK PROTEIN 70KDA"/>
    <property type="match status" value="1"/>
</dbReference>
<dbReference type="Pfam" id="PF00012">
    <property type="entry name" value="HSP70"/>
    <property type="match status" value="1"/>
</dbReference>
<dbReference type="PRINTS" id="PR00301">
    <property type="entry name" value="HEATSHOCK70"/>
</dbReference>
<dbReference type="SUPFAM" id="SSF53067">
    <property type="entry name" value="Actin-like ATPase domain"/>
    <property type="match status" value="2"/>
</dbReference>
<dbReference type="SUPFAM" id="SSF100934">
    <property type="entry name" value="Heat shock protein 70kD (HSP70), C-terminal subdomain"/>
    <property type="match status" value="1"/>
</dbReference>
<dbReference type="SUPFAM" id="SSF100920">
    <property type="entry name" value="Heat shock protein 70kD (HSP70), peptide-binding domain"/>
    <property type="match status" value="1"/>
</dbReference>
<dbReference type="PROSITE" id="PS00297">
    <property type="entry name" value="HSP70_1"/>
    <property type="match status" value="1"/>
</dbReference>
<dbReference type="PROSITE" id="PS00329">
    <property type="entry name" value="HSP70_2"/>
    <property type="match status" value="1"/>
</dbReference>
<dbReference type="PROSITE" id="PS01036">
    <property type="entry name" value="HSP70_3"/>
    <property type="match status" value="1"/>
</dbReference>
<organism>
    <name type="scientific">Methylococcus capsulatus (strain ATCC 33009 / NCIMB 11132 / Bath)</name>
    <dbReference type="NCBI Taxonomy" id="243233"/>
    <lineage>
        <taxon>Bacteria</taxon>
        <taxon>Pseudomonadati</taxon>
        <taxon>Pseudomonadota</taxon>
        <taxon>Gammaproteobacteria</taxon>
        <taxon>Methylococcales</taxon>
        <taxon>Methylococcaceae</taxon>
        <taxon>Methylococcus</taxon>
    </lineage>
</organism>
<proteinExistence type="inferred from homology"/>